<protein>
    <recommendedName>
        <fullName evidence="1">Mannitol-1-phosphate 5-dehydrogenase</fullName>
        <ecNumber evidence="1">1.1.1.17</ecNumber>
    </recommendedName>
</protein>
<organism>
    <name type="scientific">Vibrio vulnificus (strain CMCP6)</name>
    <dbReference type="NCBI Taxonomy" id="216895"/>
    <lineage>
        <taxon>Bacteria</taxon>
        <taxon>Pseudomonadati</taxon>
        <taxon>Pseudomonadota</taxon>
        <taxon>Gammaproteobacteria</taxon>
        <taxon>Vibrionales</taxon>
        <taxon>Vibrionaceae</taxon>
        <taxon>Vibrio</taxon>
    </lineage>
</organism>
<keyword id="KW-0520">NAD</keyword>
<keyword id="KW-0560">Oxidoreductase</keyword>
<gene>
    <name evidence="1" type="primary">mtlD</name>
    <name type="ordered locus">VV1_0639</name>
</gene>
<dbReference type="EC" id="1.1.1.17" evidence="1"/>
<dbReference type="EMBL" id="AE016795">
    <property type="protein sequence ID" value="AAO09152.1"/>
    <property type="molecule type" value="Genomic_DNA"/>
</dbReference>
<dbReference type="RefSeq" id="WP_011078719.1">
    <property type="nucleotide sequence ID" value="NC_004459.3"/>
</dbReference>
<dbReference type="SMR" id="Q8DEF5"/>
<dbReference type="KEGG" id="vvu:VV1_0639"/>
<dbReference type="HOGENOM" id="CLU_036089_2_0_6"/>
<dbReference type="Proteomes" id="UP000002275">
    <property type="component" value="Chromosome 1"/>
</dbReference>
<dbReference type="GO" id="GO:0005829">
    <property type="term" value="C:cytosol"/>
    <property type="evidence" value="ECO:0007669"/>
    <property type="project" value="TreeGrafter"/>
</dbReference>
<dbReference type="GO" id="GO:0008926">
    <property type="term" value="F:mannitol-1-phosphate 5-dehydrogenase activity"/>
    <property type="evidence" value="ECO:0007669"/>
    <property type="project" value="UniProtKB-UniRule"/>
</dbReference>
<dbReference type="GO" id="GO:0019592">
    <property type="term" value="P:mannitol catabolic process"/>
    <property type="evidence" value="ECO:0007669"/>
    <property type="project" value="TreeGrafter"/>
</dbReference>
<dbReference type="FunFam" id="1.10.1040.10:FF:000009">
    <property type="entry name" value="Mannitol-1-phosphate 5-dehydrogenase"/>
    <property type="match status" value="1"/>
</dbReference>
<dbReference type="FunFam" id="3.40.50.720:FF:000075">
    <property type="entry name" value="Mannitol-1-phosphate 5-dehydrogenase"/>
    <property type="match status" value="1"/>
</dbReference>
<dbReference type="Gene3D" id="1.10.1040.10">
    <property type="entry name" value="N-(1-d-carboxylethyl)-l-norvaline Dehydrogenase, domain 2"/>
    <property type="match status" value="1"/>
</dbReference>
<dbReference type="Gene3D" id="3.40.50.720">
    <property type="entry name" value="NAD(P)-binding Rossmann-like Domain"/>
    <property type="match status" value="1"/>
</dbReference>
<dbReference type="HAMAP" id="MF_00196">
    <property type="entry name" value="Mannitol_dehydrog"/>
    <property type="match status" value="1"/>
</dbReference>
<dbReference type="InterPro" id="IPR008927">
    <property type="entry name" value="6-PGluconate_DH-like_C_sf"/>
</dbReference>
<dbReference type="InterPro" id="IPR013328">
    <property type="entry name" value="6PGD_dom2"/>
</dbReference>
<dbReference type="InterPro" id="IPR023028">
    <property type="entry name" value="Mannitol_1_phos_5_DH"/>
</dbReference>
<dbReference type="InterPro" id="IPR000669">
    <property type="entry name" value="Mannitol_DH"/>
</dbReference>
<dbReference type="InterPro" id="IPR013118">
    <property type="entry name" value="Mannitol_DH_C"/>
</dbReference>
<dbReference type="InterPro" id="IPR023027">
    <property type="entry name" value="Mannitol_DH_CS"/>
</dbReference>
<dbReference type="InterPro" id="IPR013131">
    <property type="entry name" value="Mannitol_DH_N"/>
</dbReference>
<dbReference type="InterPro" id="IPR036291">
    <property type="entry name" value="NAD(P)-bd_dom_sf"/>
</dbReference>
<dbReference type="NCBIfam" id="NF002646">
    <property type="entry name" value="PRK02318.1-2"/>
    <property type="match status" value="1"/>
</dbReference>
<dbReference type="NCBIfam" id="NF002647">
    <property type="entry name" value="PRK02318.1-3"/>
    <property type="match status" value="1"/>
</dbReference>
<dbReference type="NCBIfam" id="NF002650">
    <property type="entry name" value="PRK02318.2-2"/>
    <property type="match status" value="1"/>
</dbReference>
<dbReference type="NCBIfam" id="NF002652">
    <property type="entry name" value="PRK02318.2-5"/>
    <property type="match status" value="1"/>
</dbReference>
<dbReference type="PANTHER" id="PTHR30524:SF0">
    <property type="entry name" value="ALTRONATE OXIDOREDUCTASE-RELATED"/>
    <property type="match status" value="1"/>
</dbReference>
<dbReference type="PANTHER" id="PTHR30524">
    <property type="entry name" value="MANNITOL-1-PHOSPHATE 5-DEHYDROGENASE"/>
    <property type="match status" value="1"/>
</dbReference>
<dbReference type="Pfam" id="PF01232">
    <property type="entry name" value="Mannitol_dh"/>
    <property type="match status" value="1"/>
</dbReference>
<dbReference type="Pfam" id="PF08125">
    <property type="entry name" value="Mannitol_dh_C"/>
    <property type="match status" value="1"/>
</dbReference>
<dbReference type="PRINTS" id="PR00084">
    <property type="entry name" value="MTLDHDRGNASE"/>
</dbReference>
<dbReference type="SUPFAM" id="SSF48179">
    <property type="entry name" value="6-phosphogluconate dehydrogenase C-terminal domain-like"/>
    <property type="match status" value="1"/>
</dbReference>
<dbReference type="SUPFAM" id="SSF51735">
    <property type="entry name" value="NAD(P)-binding Rossmann-fold domains"/>
    <property type="match status" value="1"/>
</dbReference>
<dbReference type="PROSITE" id="PS00974">
    <property type="entry name" value="MANNITOL_DHGENASE"/>
    <property type="match status" value="1"/>
</dbReference>
<name>MTLD_VIBVU</name>
<sequence length="382" mass="41966">MKNAVHFGAGNIGRGFIGKLLADANVAVTFADVDAPLVDQLSHKQEYKVKVVGSECQIDTVTHVTAVNSASEEVIDRIVQTDLVTTAVGPNVLDIIAKTIAQGIAKRFAAGNLAPLNIIACENMVRGTTHLKGEVYKHLDASLHAQADELVGFVDSAVDRIVPPAEAANDDPLEVTVESFSEWIVDEQQFKGEVPSIAGMEKTHNLMAFVERKLFTLNTGHCITAYLGCLQGHRTIREAIENPAIRDQVKQAMMESGEVLIRRYGFDREMHQAYIEKILARFANPFLVDEVDRVGRQPIRKLGMNDRLIKPLLGTIEFGTANQHLLKGIAAALKYQNDSDPQAVELQRSLQQVGVKKTLAKYTSLAEDSVEVAKIETLYNQL</sequence>
<reference key="1">
    <citation type="submission" date="2002-12" db="EMBL/GenBank/DDBJ databases">
        <title>Complete genome sequence of Vibrio vulnificus CMCP6.</title>
        <authorList>
            <person name="Rhee J.H."/>
            <person name="Kim S.Y."/>
            <person name="Chung S.S."/>
            <person name="Kim J.J."/>
            <person name="Moon Y.H."/>
            <person name="Jeong H."/>
            <person name="Choy H.E."/>
        </authorList>
    </citation>
    <scope>NUCLEOTIDE SEQUENCE [LARGE SCALE GENOMIC DNA]</scope>
    <source>
        <strain>CMCP6</strain>
    </source>
</reference>
<evidence type="ECO:0000255" key="1">
    <source>
        <dbReference type="HAMAP-Rule" id="MF_00196"/>
    </source>
</evidence>
<accession>Q8DEF5</accession>
<feature type="chain" id="PRO_0000170731" description="Mannitol-1-phosphate 5-dehydrogenase">
    <location>
        <begin position="1"/>
        <end position="382"/>
    </location>
</feature>
<feature type="binding site" evidence="1">
    <location>
        <begin position="4"/>
        <end position="15"/>
    </location>
    <ligand>
        <name>NAD(+)</name>
        <dbReference type="ChEBI" id="CHEBI:57540"/>
    </ligand>
</feature>
<proteinExistence type="inferred from homology"/>
<comment type="catalytic activity">
    <reaction evidence="1">
        <text>D-mannitol 1-phosphate + NAD(+) = beta-D-fructose 6-phosphate + NADH + H(+)</text>
        <dbReference type="Rhea" id="RHEA:19661"/>
        <dbReference type="ChEBI" id="CHEBI:15378"/>
        <dbReference type="ChEBI" id="CHEBI:57540"/>
        <dbReference type="ChEBI" id="CHEBI:57634"/>
        <dbReference type="ChEBI" id="CHEBI:57945"/>
        <dbReference type="ChEBI" id="CHEBI:61381"/>
        <dbReference type="EC" id="1.1.1.17"/>
    </reaction>
</comment>
<comment type="similarity">
    <text evidence="1">Belongs to the mannitol dehydrogenase family.</text>
</comment>